<dbReference type="EMBL" id="CP017626">
    <property type="protein sequence ID" value="AOW28889.1"/>
    <property type="molecule type" value="Genomic_DNA"/>
</dbReference>
<dbReference type="RefSeq" id="XP_722756.1">
    <property type="nucleotide sequence ID" value="XM_717663.1"/>
</dbReference>
<dbReference type="STRING" id="237561.Q5AMF7"/>
<dbReference type="GlyCosmos" id="Q5AMF7">
    <property type="glycosylation" value="1 site, No reported glycans"/>
</dbReference>
<dbReference type="EnsemblFungi" id="C4_01000C_A-T">
    <property type="protein sequence ID" value="C4_01000C_A-T-p1"/>
    <property type="gene ID" value="C4_01000C_A"/>
</dbReference>
<dbReference type="GeneID" id="3635608"/>
<dbReference type="KEGG" id="cal:CAALFM_C401000CA"/>
<dbReference type="CGD" id="CAL0000175219">
    <property type="gene designation" value="PGA57"/>
</dbReference>
<dbReference type="VEuPathDB" id="FungiDB:C4_01000C_A"/>
<dbReference type="HOGENOM" id="CLU_114600_0_0_1"/>
<dbReference type="InParanoid" id="Q5AMF7"/>
<dbReference type="OMA" id="QIICVSI"/>
<dbReference type="OrthoDB" id="4025650at2759"/>
<dbReference type="PRO" id="PR:Q5AMF7"/>
<dbReference type="Proteomes" id="UP000000559">
    <property type="component" value="Chromosome 4"/>
</dbReference>
<dbReference type="GO" id="GO:0005576">
    <property type="term" value="C:extracellular region"/>
    <property type="evidence" value="ECO:0007669"/>
    <property type="project" value="UniProtKB-SubCell"/>
</dbReference>
<dbReference type="GO" id="GO:0005886">
    <property type="term" value="C:plasma membrane"/>
    <property type="evidence" value="ECO:0007669"/>
    <property type="project" value="UniProtKB-SubCell"/>
</dbReference>
<dbReference type="GO" id="GO:0098552">
    <property type="term" value="C:side of membrane"/>
    <property type="evidence" value="ECO:0007669"/>
    <property type="project" value="UniProtKB-KW"/>
</dbReference>
<proteinExistence type="evidence at protein level"/>
<evidence type="ECO:0000250" key="1"/>
<evidence type="ECO:0000255" key="2"/>
<evidence type="ECO:0000256" key="3">
    <source>
        <dbReference type="SAM" id="MobiDB-lite"/>
    </source>
</evidence>
<evidence type="ECO:0000269" key="4">
    <source>
    </source>
</evidence>
<evidence type="ECO:0000269" key="5">
    <source>
    </source>
</evidence>
<evidence type="ECO:0000305" key="6"/>
<feature type="signal peptide" evidence="2">
    <location>
        <begin position="1"/>
        <end position="18"/>
    </location>
</feature>
<feature type="chain" id="PRO_0000424951" description="Predicted GPI-anchored protein 57">
    <location>
        <begin position="19"/>
        <end position="191"/>
    </location>
</feature>
<feature type="propeptide" id="PRO_0000424952" description="Removed in mature form" evidence="2">
    <location>
        <begin position="192"/>
        <end position="214"/>
    </location>
</feature>
<feature type="region of interest" description="Disordered" evidence="3">
    <location>
        <begin position="36"/>
        <end position="101"/>
    </location>
</feature>
<feature type="compositionally biased region" description="Gly residues" evidence="3">
    <location>
        <begin position="42"/>
        <end position="60"/>
    </location>
</feature>
<feature type="compositionally biased region" description="Low complexity" evidence="3">
    <location>
        <begin position="76"/>
        <end position="85"/>
    </location>
</feature>
<feature type="lipid moiety-binding region" description="GPI-anchor amidated glycine" evidence="2">
    <location>
        <position position="191"/>
    </location>
</feature>
<feature type="glycosylation site" description="N-linked (GlcNAc...) asparagine" evidence="2">
    <location>
        <position position="182"/>
    </location>
</feature>
<accession>Q5AMF7</accession>
<accession>A0A1D8PL93</accession>
<accession>Q5AMW3</accession>
<name>PGA57_CANAL</name>
<keyword id="KW-1003">Cell membrane</keyword>
<keyword id="KW-0325">Glycoprotein</keyword>
<keyword id="KW-0336">GPI-anchor</keyword>
<keyword id="KW-0449">Lipoprotein</keyword>
<keyword id="KW-0472">Membrane</keyword>
<keyword id="KW-1185">Reference proteome</keyword>
<keyword id="KW-0964">Secreted</keyword>
<keyword id="KW-0732">Signal</keyword>
<protein>
    <recommendedName>
        <fullName>Predicted GPI-anchored protein 57</fullName>
    </recommendedName>
</protein>
<comment type="function">
    <text evidence="1">Predicted GPI-anchored protein which may have a role during host infection.</text>
</comment>
<comment type="subcellular location">
    <subcellularLocation>
        <location evidence="4">Secreted</location>
    </subcellularLocation>
    <subcellularLocation>
        <location evidence="6">Cell membrane</location>
        <topology evidence="6">Lipid-anchor</topology>
        <topology evidence="6">GPI-anchor</topology>
    </subcellularLocation>
</comment>
<comment type="induction">
    <text evidence="5">Induced by HAP43.</text>
</comment>
<comment type="similarity">
    <text evidence="6">Belongs to the PGA37 family.</text>
</comment>
<reference key="1">
    <citation type="journal article" date="2004" name="Proc. Natl. Acad. Sci. U.S.A.">
        <title>The diploid genome sequence of Candida albicans.</title>
        <authorList>
            <person name="Jones T."/>
            <person name="Federspiel N.A."/>
            <person name="Chibana H."/>
            <person name="Dungan J."/>
            <person name="Kalman S."/>
            <person name="Magee B.B."/>
            <person name="Newport G."/>
            <person name="Thorstenson Y.R."/>
            <person name="Agabian N."/>
            <person name="Magee P.T."/>
            <person name="Davis R.W."/>
            <person name="Scherer S."/>
        </authorList>
    </citation>
    <scope>NUCLEOTIDE SEQUENCE [LARGE SCALE GENOMIC DNA]</scope>
    <source>
        <strain>SC5314 / ATCC MYA-2876</strain>
    </source>
</reference>
<reference key="2">
    <citation type="journal article" date="2007" name="Genome Biol.">
        <title>Assembly of the Candida albicans genome into sixteen supercontigs aligned on the eight chromosomes.</title>
        <authorList>
            <person name="van het Hoog M."/>
            <person name="Rast T.J."/>
            <person name="Martchenko M."/>
            <person name="Grindle S."/>
            <person name="Dignard D."/>
            <person name="Hogues H."/>
            <person name="Cuomo C."/>
            <person name="Berriman M."/>
            <person name="Scherer S."/>
            <person name="Magee B.B."/>
            <person name="Whiteway M."/>
            <person name="Chibana H."/>
            <person name="Nantel A."/>
            <person name="Magee P.T."/>
        </authorList>
    </citation>
    <scope>GENOME REANNOTATION</scope>
    <source>
        <strain>SC5314 / ATCC MYA-2876</strain>
    </source>
</reference>
<reference key="3">
    <citation type="journal article" date="2013" name="Genome Biol.">
        <title>Assembly of a phased diploid Candida albicans genome facilitates allele-specific measurements and provides a simple model for repeat and indel structure.</title>
        <authorList>
            <person name="Muzzey D."/>
            <person name="Schwartz K."/>
            <person name="Weissman J.S."/>
            <person name="Sherlock G."/>
        </authorList>
    </citation>
    <scope>NUCLEOTIDE SEQUENCE [LARGE SCALE GENOMIC DNA]</scope>
    <scope>GENOME REANNOTATION</scope>
    <source>
        <strain>SC5314 / ATCC MYA-2876</strain>
    </source>
</reference>
<reference key="4">
    <citation type="journal article" date="2002" name="Eukaryot. Cell">
        <title>Large-scale identification of putative exported proteins in Candida albicans by genetic selection.</title>
        <authorList>
            <person name="Monteoliva L."/>
            <person name="Matas M.L."/>
            <person name="Gil C."/>
            <person name="Nombela C."/>
            <person name="Pla J."/>
        </authorList>
    </citation>
    <scope>SUBCELLULAR LOCATION</scope>
</reference>
<reference key="5">
    <citation type="journal article" date="2003" name="Yeast">
        <title>Genome-wide identification of fungal GPI proteins.</title>
        <authorList>
            <person name="De Groot P.W."/>
            <person name="Hellingwerf K.J."/>
            <person name="Klis F.M."/>
        </authorList>
    </citation>
    <scope>PREDICTION OF GPI-ANCHOR</scope>
</reference>
<reference key="6">
    <citation type="journal article" date="2011" name="J. Biol. Chem.">
        <title>Cap2-HAP complex is a critical transcriptional regulator that has dual but contrasting roles in regulation of iron homeostasis in Candida albicans.</title>
        <authorList>
            <person name="Singh R.P."/>
            <person name="Prasad H.K."/>
            <person name="Sinha I."/>
            <person name="Agarwal N."/>
            <person name="Natarajan K."/>
        </authorList>
    </citation>
    <scope>INDUCTION</scope>
</reference>
<sequence length="214" mass="21206">MLFTQLIILFTFISQIICVSISDLNNIALIQFTKRRGSSGHSSGGGHSSSGSHSSGGGHSSSGSSSSGSKGGGSSSGSSSGSSSGTKGGGSSSGSSSGSRNWGSNQYHCTGNSCGYGNYFAPSAAAAAVGYGTGRYTGGTKYGNNQYHCSGSTCGYGNYYAPTAASAAAGYGSARYAGQHNNSTSTKTSFGVSLNIPSTHFYVIGLAAAYSIVL</sequence>
<organism>
    <name type="scientific">Candida albicans (strain SC5314 / ATCC MYA-2876)</name>
    <name type="common">Yeast</name>
    <dbReference type="NCBI Taxonomy" id="237561"/>
    <lineage>
        <taxon>Eukaryota</taxon>
        <taxon>Fungi</taxon>
        <taxon>Dikarya</taxon>
        <taxon>Ascomycota</taxon>
        <taxon>Saccharomycotina</taxon>
        <taxon>Pichiomycetes</taxon>
        <taxon>Debaryomycetaceae</taxon>
        <taxon>Candida/Lodderomyces clade</taxon>
        <taxon>Candida</taxon>
    </lineage>
</organism>
<gene>
    <name type="primary">PGA57</name>
    <name type="ordered locus">CAALFM_C401000CA</name>
    <name type="ORF">CaO19.12158</name>
    <name type="ORF">CaO19.4689</name>
</gene>